<proteinExistence type="evidence at protein level"/>
<protein>
    <recommendedName>
        <fullName>Zinc finger protein 829</fullName>
    </recommendedName>
</protein>
<evidence type="ECO:0000255" key="1">
    <source>
        <dbReference type="PROSITE-ProRule" id="PRU00042"/>
    </source>
</evidence>
<evidence type="ECO:0000255" key="2">
    <source>
        <dbReference type="PROSITE-ProRule" id="PRU00119"/>
    </source>
</evidence>
<evidence type="ECO:0000303" key="3">
    <source>
    </source>
</evidence>
<evidence type="ECO:0000305" key="4"/>
<feature type="chain" id="PRO_0000335808" description="Zinc finger protein 829">
    <location>
        <begin position="1"/>
        <end position="432"/>
    </location>
</feature>
<feature type="domain" description="KRAB" evidence="2">
    <location>
        <begin position="35"/>
        <end position="106"/>
    </location>
</feature>
<feature type="zinc finger region" description="C2H2-type 1" evidence="1">
    <location>
        <begin position="156"/>
        <end position="178"/>
    </location>
</feature>
<feature type="zinc finger region" description="C2H2-type 2; degenerate" evidence="1">
    <location>
        <begin position="184"/>
        <end position="206"/>
    </location>
</feature>
<feature type="zinc finger region" description="C2H2-type 3" evidence="1">
    <location>
        <begin position="212"/>
        <end position="234"/>
    </location>
</feature>
<feature type="zinc finger region" description="C2H2-type 4" evidence="1">
    <location>
        <begin position="240"/>
        <end position="262"/>
    </location>
</feature>
<feature type="zinc finger region" description="C2H2-type 5" evidence="1">
    <location>
        <begin position="268"/>
        <end position="290"/>
    </location>
</feature>
<feature type="zinc finger region" description="C2H2-type 6" evidence="1">
    <location>
        <begin position="296"/>
        <end position="318"/>
    </location>
</feature>
<feature type="zinc finger region" description="C2H2-type 7" evidence="1">
    <location>
        <begin position="324"/>
        <end position="346"/>
    </location>
</feature>
<feature type="zinc finger region" description="C2H2-type 8" evidence="1">
    <location>
        <begin position="352"/>
        <end position="374"/>
    </location>
</feature>
<feature type="zinc finger region" description="C2H2-type 9" evidence="1">
    <location>
        <begin position="380"/>
        <end position="402"/>
    </location>
</feature>
<feature type="zinc finger region" description="C2H2-type 10" evidence="1">
    <location>
        <begin position="408"/>
        <end position="430"/>
    </location>
</feature>
<feature type="splice variant" id="VSP_033769" description="In isoform 2." evidence="3">
    <location>
        <begin position="1"/>
        <end position="184"/>
    </location>
</feature>
<feature type="splice variant" id="VSP_057606" description="In isoform 3.">
    <original>M</original>
    <variation>MTGKGLGEDTEDRWGAGALGPCGRSGLKGGGCVWEAEAGGSRGQEIETILANMETSLRSGQIPTLDSSEHNLSPEPLELDRM</variation>
    <location>
        <position position="1"/>
    </location>
</feature>
<feature type="splice variant" id="VSP_033770" description="In isoform 2." evidence="3">
    <original>ES</original>
    <variation>MN</variation>
    <location>
        <begin position="185"/>
        <end position="186"/>
    </location>
</feature>
<keyword id="KW-0025">Alternative splicing</keyword>
<keyword id="KW-0238">DNA-binding</keyword>
<keyword id="KW-0479">Metal-binding</keyword>
<keyword id="KW-0539">Nucleus</keyword>
<keyword id="KW-1267">Proteomics identification</keyword>
<keyword id="KW-1185">Reference proteome</keyword>
<keyword id="KW-0677">Repeat</keyword>
<keyword id="KW-0804">Transcription</keyword>
<keyword id="KW-0805">Transcription regulation</keyword>
<keyword id="KW-0862">Zinc</keyword>
<keyword id="KW-0863">Zinc-finger</keyword>
<organism>
    <name type="scientific">Homo sapiens</name>
    <name type="common">Human</name>
    <dbReference type="NCBI Taxonomy" id="9606"/>
    <lineage>
        <taxon>Eukaryota</taxon>
        <taxon>Metazoa</taxon>
        <taxon>Chordata</taxon>
        <taxon>Craniata</taxon>
        <taxon>Vertebrata</taxon>
        <taxon>Euteleostomi</taxon>
        <taxon>Mammalia</taxon>
        <taxon>Eutheria</taxon>
        <taxon>Euarchontoglires</taxon>
        <taxon>Primates</taxon>
        <taxon>Haplorrhini</taxon>
        <taxon>Catarrhini</taxon>
        <taxon>Hominidae</taxon>
        <taxon>Homo</taxon>
    </lineage>
</organism>
<comment type="function">
    <text>May be involved in transcriptional regulation.</text>
</comment>
<comment type="interaction">
    <interactant intactId="EBI-18036029">
        <id>Q3KNS6-3</id>
    </interactant>
    <interactant intactId="EBI-11530605">
        <id>Q9H257-2</id>
        <label>CARD9</label>
    </interactant>
    <organismsDiffer>false</organismsDiffer>
    <experiments>3</experiments>
</comment>
<comment type="interaction">
    <interactant intactId="EBI-18036029">
        <id>Q3KNS6-3</id>
    </interactant>
    <interactant intactId="EBI-718729">
        <id>P55212</id>
        <label>CASP6</label>
    </interactant>
    <organismsDiffer>false</organismsDiffer>
    <experiments>3</experiments>
</comment>
<comment type="interaction">
    <interactant intactId="EBI-18036029">
        <id>Q3KNS6-3</id>
    </interactant>
    <interactant intactId="EBI-25837549">
        <id>P28329-3</id>
        <label>CHAT</label>
    </interactant>
    <organismsDiffer>false</organismsDiffer>
    <experiments>3</experiments>
</comment>
<comment type="interaction">
    <interactant intactId="EBI-18036029">
        <id>Q3KNS6-3</id>
    </interactant>
    <interactant intactId="EBI-10976677">
        <id>G5E9A7</id>
        <label>DMWD</label>
    </interactant>
    <organismsDiffer>false</organismsDiffer>
    <experiments>3</experiments>
</comment>
<comment type="interaction">
    <interactant intactId="EBI-18036029">
        <id>Q3KNS6-3</id>
    </interactant>
    <interactant intactId="EBI-1053164">
        <id>O75190</id>
        <label>DNAJB6</label>
    </interactant>
    <organismsDiffer>false</organismsDiffer>
    <experiments>3</experiments>
</comment>
<comment type="interaction">
    <interactant intactId="EBI-18036029">
        <id>Q3KNS6-3</id>
    </interactant>
    <interactant intactId="EBI-750300">
        <id>Q01658</id>
        <label>DR1</label>
    </interactant>
    <organismsDiffer>false</organismsDiffer>
    <experiments>3</experiments>
</comment>
<comment type="interaction">
    <interactant intactId="EBI-18036029">
        <id>Q3KNS6-3</id>
    </interactant>
    <interactant intactId="EBI-1054228">
        <id>P41091</id>
        <label>EIF2S3</label>
    </interactant>
    <organismsDiffer>false</organismsDiffer>
    <experiments>3</experiments>
</comment>
<comment type="interaction">
    <interactant intactId="EBI-18036029">
        <id>Q3KNS6-3</id>
    </interactant>
    <interactant intactId="EBI-25852368">
        <id>O75460-2</id>
        <label>ERN1</label>
    </interactant>
    <organismsDiffer>false</organismsDiffer>
    <experiments>3</experiments>
</comment>
<comment type="interaction">
    <interactant intactId="EBI-18036029">
        <id>Q3KNS6-3</id>
    </interactant>
    <interactant intactId="EBI-2510157">
        <id>Q96EF6</id>
        <label>FBXO17</label>
    </interactant>
    <organismsDiffer>false</organismsDiffer>
    <experiments>3</experiments>
</comment>
<comment type="interaction">
    <interactant intactId="EBI-18036029">
        <id>Q3KNS6-3</id>
    </interactant>
    <interactant intactId="EBI-348399">
        <id>P22607</id>
        <label>FGFR3</label>
    </interactant>
    <organismsDiffer>false</organismsDiffer>
    <experiments>3</experiments>
</comment>
<comment type="interaction">
    <interactant intactId="EBI-18036029">
        <id>Q3KNS6-3</id>
    </interactant>
    <interactant intactId="EBI-10226858">
        <id>Q0VDC6</id>
        <label>FKBP1A</label>
    </interactant>
    <organismsDiffer>false</organismsDiffer>
    <experiments>3</experiments>
</comment>
<comment type="interaction">
    <interactant intactId="EBI-18036029">
        <id>Q3KNS6-3</id>
    </interactant>
    <interactant intactId="EBI-8285963">
        <id>Q14957</id>
        <label>GRIN2C</label>
    </interactant>
    <organismsDiffer>false</organismsDiffer>
    <experiments>3</experiments>
</comment>
<comment type="interaction">
    <interactant intactId="EBI-18036029">
        <id>Q3KNS6-3</id>
    </interactant>
    <interactant intactId="EBI-351506">
        <id>P06396</id>
        <label>GSN</label>
    </interactant>
    <organismsDiffer>false</organismsDiffer>
    <experiments>3</experiments>
</comment>
<comment type="interaction">
    <interactant intactId="EBI-18036029">
        <id>Q3KNS6-3</id>
    </interactant>
    <interactant intactId="EBI-389564">
        <id>Q00403</id>
        <label>GTF2B</label>
    </interactant>
    <organismsDiffer>false</organismsDiffer>
    <experiments>3</experiments>
</comment>
<comment type="interaction">
    <interactant intactId="EBI-18036029">
        <id>Q3KNS6-3</id>
    </interactant>
    <interactant intactId="EBI-1054873">
        <id>Q9Y5Q9</id>
        <label>GTF3C3</label>
    </interactant>
    <organismsDiffer>false</organismsDiffer>
    <experiments>3</experiments>
</comment>
<comment type="interaction">
    <interactant intactId="EBI-18036029">
        <id>Q3KNS6-3</id>
    </interactant>
    <interactant intactId="EBI-356991">
        <id>P54652</id>
        <label>HSPA2</label>
    </interactant>
    <organismsDiffer>false</organismsDiffer>
    <experiments>3</experiments>
</comment>
<comment type="interaction">
    <interactant intactId="EBI-18036029">
        <id>Q3KNS6-3</id>
    </interactant>
    <interactant intactId="EBI-466029">
        <id>P42858</id>
        <label>HTT</label>
    </interactant>
    <organismsDiffer>false</organismsDiffer>
    <experiments>6</experiments>
</comment>
<comment type="interaction">
    <interactant intactId="EBI-18036029">
        <id>Q3KNS6-3</id>
    </interactant>
    <interactant intactId="EBI-10975473">
        <id>O60333-2</id>
        <label>KIF1B</label>
    </interactant>
    <organismsDiffer>false</organismsDiffer>
    <experiments>3</experiments>
</comment>
<comment type="interaction">
    <interactant intactId="EBI-18036029">
        <id>Q3KNS6-3</id>
    </interactant>
    <interactant intactId="EBI-739909">
        <id>Q969R5</id>
        <label>L3MBTL2</label>
    </interactant>
    <organismsDiffer>false</organismsDiffer>
    <experiments>3</experiments>
</comment>
<comment type="interaction">
    <interactant intactId="EBI-18036029">
        <id>Q3KNS6-3</id>
    </interactant>
    <interactant intactId="EBI-21591415">
        <id>P13473-2</id>
        <label>LAMP2</label>
    </interactant>
    <organismsDiffer>false</organismsDiffer>
    <experiments>3</experiments>
</comment>
<comment type="interaction">
    <interactant intactId="EBI-18036029">
        <id>Q3KNS6-3</id>
    </interactant>
    <interactant intactId="EBI-1246261">
        <id>O14561</id>
        <label>NDUFAB1</label>
    </interactant>
    <organismsDiffer>false</organismsDiffer>
    <experiments>3</experiments>
</comment>
<comment type="interaction">
    <interactant intactId="EBI-18036029">
        <id>Q3KNS6-3</id>
    </interactant>
    <interactant intactId="EBI-475646">
        <id>P07196</id>
        <label>NEFL</label>
    </interactant>
    <organismsDiffer>false</organismsDiffer>
    <experiments>3</experiments>
</comment>
<comment type="interaction">
    <interactant intactId="EBI-18036029">
        <id>Q3KNS6-3</id>
    </interactant>
    <interactant intactId="EBI-1237011">
        <id>P50897</id>
        <label>PPT1</label>
    </interactant>
    <organismsDiffer>false</organismsDiffer>
    <experiments>3</experiments>
</comment>
<comment type="interaction">
    <interactant intactId="EBI-18036029">
        <id>Q3KNS6-3</id>
    </interactant>
    <interactant intactId="EBI-5280197">
        <id>O75400-2</id>
        <label>PRPF40A</label>
    </interactant>
    <organismsDiffer>false</organismsDiffer>
    <experiments>3</experiments>
</comment>
<comment type="interaction">
    <interactant intactId="EBI-18036029">
        <id>Q3KNS6-3</id>
    </interactant>
    <interactant intactId="EBI-749195">
        <id>P60891</id>
        <label>PRPS1</label>
    </interactant>
    <organismsDiffer>false</organismsDiffer>
    <experiments>3</experiments>
</comment>
<comment type="interaction">
    <interactant intactId="EBI-18036029">
        <id>Q3KNS6-3</id>
    </interactant>
    <interactant intactId="EBI-286642">
        <id>P62826</id>
        <label>RAN</label>
    </interactant>
    <organismsDiffer>false</organismsDiffer>
    <experiments>3</experiments>
</comment>
<comment type="interaction">
    <interactant intactId="EBI-18036029">
        <id>Q3KNS6-3</id>
    </interactant>
    <interactant intactId="EBI-748391">
        <id>Q9BWG6</id>
        <label>SCNM1</label>
    </interactant>
    <organismsDiffer>false</organismsDiffer>
    <experiments>3</experiments>
</comment>
<comment type="interaction">
    <interactant intactId="EBI-18036029">
        <id>Q3KNS6-3</id>
    </interactant>
    <interactant intactId="EBI-2623095">
        <id>Q9Y371</id>
        <label>SH3GLB1</label>
    </interactant>
    <organismsDiffer>false</organismsDiffer>
    <experiments>3</experiments>
</comment>
<comment type="interaction">
    <interactant intactId="EBI-18036029">
        <id>Q3KNS6-3</id>
    </interactant>
    <interactant intactId="EBI-5235340">
        <id>Q7Z699</id>
        <label>SPRED1</label>
    </interactant>
    <organismsDiffer>false</organismsDiffer>
    <experiments>3</experiments>
</comment>
<comment type="interaction">
    <interactant intactId="EBI-18036029">
        <id>Q3KNS6-3</id>
    </interactant>
    <interactant intactId="EBI-740492">
        <id>Q9UKI8</id>
        <label>TLK1</label>
    </interactant>
    <organismsDiffer>false</organismsDiffer>
    <experiments>3</experiments>
</comment>
<comment type="interaction">
    <interactant intactId="EBI-18036029">
        <id>Q3KNS6-3</id>
    </interactant>
    <interactant intactId="EBI-741480">
        <id>Q9UMX0</id>
        <label>UBQLN1</label>
    </interactant>
    <organismsDiffer>false</organismsDiffer>
    <experiments>3</experiments>
</comment>
<comment type="interaction">
    <interactant intactId="EBI-18036029">
        <id>Q3KNS6-3</id>
    </interactant>
    <interactant intactId="EBI-720609">
        <id>O76024</id>
        <label>WFS1</label>
    </interactant>
    <organismsDiffer>false</organismsDiffer>
    <experiments>3</experiments>
</comment>
<comment type="interaction">
    <interactant intactId="EBI-18036029">
        <id>Q3KNS6-3</id>
    </interactant>
    <interactant intactId="EBI-10300345">
        <id>Q9BW85</id>
        <label>YJU2</label>
    </interactant>
    <organismsDiffer>false</organismsDiffer>
    <experiments>3</experiments>
</comment>
<comment type="interaction">
    <interactant intactId="EBI-18036029">
        <id>Q3KNS6-3</id>
    </interactant>
    <interactant intactId="EBI-6427977">
        <id>Q96SQ5</id>
        <label>ZNF587</label>
    </interactant>
    <organismsDiffer>false</organismsDiffer>
    <experiments>3</experiments>
</comment>
<comment type="subcellular location">
    <subcellularLocation>
        <location evidence="4">Nucleus</location>
    </subcellularLocation>
</comment>
<comment type="alternative products">
    <event type="alternative splicing"/>
    <isoform>
        <id>Q3KNS6-1</id>
        <name>1</name>
        <sequence type="displayed"/>
    </isoform>
    <isoform>
        <id>Q3KNS6-2</id>
        <name>2</name>
        <sequence type="described" ref="VSP_033769 VSP_033770"/>
    </isoform>
    <isoform>
        <id>Q3KNS6-3</id>
        <name>3</name>
        <sequence type="described" ref="VSP_057606"/>
    </isoform>
</comment>
<comment type="similarity">
    <text evidence="4">Belongs to the krueppel C2H2-type zinc-finger protein family.</text>
</comment>
<comment type="sequence caution" evidence="4">
    <conflict type="erroneous initiation">
        <sequence resource="EMBL-CDS" id="CAD98083"/>
    </conflict>
    <text>Extended N-terminus.</text>
</comment>
<accession>Q3KNS6</accession>
<accession>A0A075B6T0</accession>
<accession>Q3KNS7</accession>
<accession>Q6ZNN0</accession>
<accession>Q7Z657</accession>
<reference key="1">
    <citation type="journal article" date="2007" name="BMC Genomics">
        <title>The full-ORF clone resource of the German cDNA consortium.</title>
        <authorList>
            <person name="Bechtel S."/>
            <person name="Rosenfelder H."/>
            <person name="Duda A."/>
            <person name="Schmidt C.P."/>
            <person name="Ernst U."/>
            <person name="Wellenreuther R."/>
            <person name="Mehrle A."/>
            <person name="Schuster C."/>
            <person name="Bahr A."/>
            <person name="Bloecker H."/>
            <person name="Heubner D."/>
            <person name="Hoerlein A."/>
            <person name="Michel G."/>
            <person name="Wedler H."/>
            <person name="Koehrer K."/>
            <person name="Ottenwaelder B."/>
            <person name="Poustka A."/>
            <person name="Wiemann S."/>
            <person name="Schupp I."/>
        </authorList>
    </citation>
    <scope>NUCLEOTIDE SEQUENCE [LARGE SCALE MRNA] (ISOFORM 1)</scope>
    <source>
        <tissue>Liver</tissue>
    </source>
</reference>
<reference key="2">
    <citation type="journal article" date="2004" name="Genome Res.">
        <title>The status, quality, and expansion of the NIH full-length cDNA project: the Mammalian Gene Collection (MGC).</title>
        <authorList>
            <consortium name="The MGC Project Team"/>
        </authorList>
    </citation>
    <scope>NUCLEOTIDE SEQUENCE [LARGE SCALE MRNA] (ISOFORMS 1 AND 2)</scope>
</reference>
<reference key="3">
    <citation type="journal article" date="2004" name="Nat. Genet.">
        <title>Complete sequencing and characterization of 21,243 full-length human cDNAs.</title>
        <authorList>
            <person name="Ota T."/>
            <person name="Suzuki Y."/>
            <person name="Nishikawa T."/>
            <person name="Otsuki T."/>
            <person name="Sugiyama T."/>
            <person name="Irie R."/>
            <person name="Wakamatsu A."/>
            <person name="Hayashi K."/>
            <person name="Sato H."/>
            <person name="Nagai K."/>
            <person name="Kimura K."/>
            <person name="Makita H."/>
            <person name="Sekine M."/>
            <person name="Obayashi M."/>
            <person name="Nishi T."/>
            <person name="Shibahara T."/>
            <person name="Tanaka T."/>
            <person name="Ishii S."/>
            <person name="Yamamoto J."/>
            <person name="Saito K."/>
            <person name="Kawai Y."/>
            <person name="Isono Y."/>
            <person name="Nakamura Y."/>
            <person name="Nagahari K."/>
            <person name="Murakami K."/>
            <person name="Yasuda T."/>
            <person name="Iwayanagi T."/>
            <person name="Wagatsuma M."/>
            <person name="Shiratori A."/>
            <person name="Sudo H."/>
            <person name="Hosoiri T."/>
            <person name="Kaku Y."/>
            <person name="Kodaira H."/>
            <person name="Kondo H."/>
            <person name="Sugawara M."/>
            <person name="Takahashi M."/>
            <person name="Kanda K."/>
            <person name="Yokoi T."/>
            <person name="Furuya T."/>
            <person name="Kikkawa E."/>
            <person name="Omura Y."/>
            <person name="Abe K."/>
            <person name="Kamihara K."/>
            <person name="Katsuta N."/>
            <person name="Sato K."/>
            <person name="Tanikawa M."/>
            <person name="Yamazaki M."/>
            <person name="Ninomiya K."/>
            <person name="Ishibashi T."/>
            <person name="Yamashita H."/>
            <person name="Murakawa K."/>
            <person name="Fujimori K."/>
            <person name="Tanai H."/>
            <person name="Kimata M."/>
            <person name="Watanabe M."/>
            <person name="Hiraoka S."/>
            <person name="Chiba Y."/>
            <person name="Ishida S."/>
            <person name="Ono Y."/>
            <person name="Takiguchi S."/>
            <person name="Watanabe S."/>
            <person name="Yosida M."/>
            <person name="Hotuta T."/>
            <person name="Kusano J."/>
            <person name="Kanehori K."/>
            <person name="Takahashi-Fujii A."/>
            <person name="Hara H."/>
            <person name="Tanase T.-O."/>
            <person name="Nomura Y."/>
            <person name="Togiya S."/>
            <person name="Komai F."/>
            <person name="Hara R."/>
            <person name="Takeuchi K."/>
            <person name="Arita M."/>
            <person name="Imose N."/>
            <person name="Musashino K."/>
            <person name="Yuuki H."/>
            <person name="Oshima A."/>
            <person name="Sasaki N."/>
            <person name="Aotsuka S."/>
            <person name="Yoshikawa Y."/>
            <person name="Matsunawa H."/>
            <person name="Ichihara T."/>
            <person name="Shiohata N."/>
            <person name="Sano S."/>
            <person name="Moriya S."/>
            <person name="Momiyama H."/>
            <person name="Satoh N."/>
            <person name="Takami S."/>
            <person name="Terashima Y."/>
            <person name="Suzuki O."/>
            <person name="Nakagawa S."/>
            <person name="Senoh A."/>
            <person name="Mizoguchi H."/>
            <person name="Goto Y."/>
            <person name="Shimizu F."/>
            <person name="Wakebe H."/>
            <person name="Hishigaki H."/>
            <person name="Watanabe T."/>
            <person name="Sugiyama A."/>
            <person name="Takemoto M."/>
            <person name="Kawakami B."/>
            <person name="Yamazaki M."/>
            <person name="Watanabe K."/>
            <person name="Kumagai A."/>
            <person name="Itakura S."/>
            <person name="Fukuzumi Y."/>
            <person name="Fujimori Y."/>
            <person name="Komiyama M."/>
            <person name="Tashiro H."/>
            <person name="Tanigami A."/>
            <person name="Fujiwara T."/>
            <person name="Ono T."/>
            <person name="Yamada K."/>
            <person name="Fujii Y."/>
            <person name="Ozaki K."/>
            <person name="Hirao M."/>
            <person name="Ohmori Y."/>
            <person name="Kawabata A."/>
            <person name="Hikiji T."/>
            <person name="Kobatake N."/>
            <person name="Inagaki H."/>
            <person name="Ikema Y."/>
            <person name="Okamoto S."/>
            <person name="Okitani R."/>
            <person name="Kawakami T."/>
            <person name="Noguchi S."/>
            <person name="Itoh T."/>
            <person name="Shigeta K."/>
            <person name="Senba T."/>
            <person name="Matsumura K."/>
            <person name="Nakajima Y."/>
            <person name="Mizuno T."/>
            <person name="Morinaga M."/>
            <person name="Sasaki M."/>
            <person name="Togashi T."/>
            <person name="Oyama M."/>
            <person name="Hata H."/>
            <person name="Watanabe M."/>
            <person name="Komatsu T."/>
            <person name="Mizushima-Sugano J."/>
            <person name="Satoh T."/>
            <person name="Shirai Y."/>
            <person name="Takahashi Y."/>
            <person name="Nakagawa K."/>
            <person name="Okumura K."/>
            <person name="Nagase T."/>
            <person name="Nomura N."/>
            <person name="Kikuchi H."/>
            <person name="Masuho Y."/>
            <person name="Yamashita R."/>
            <person name="Nakai K."/>
            <person name="Yada T."/>
            <person name="Nakamura Y."/>
            <person name="Ohara O."/>
            <person name="Isogai T."/>
            <person name="Sugano S."/>
        </authorList>
    </citation>
    <scope>NUCLEOTIDE SEQUENCE [LARGE SCALE MRNA] OF 1-182 (ISOFORM 1)</scope>
    <source>
        <tissue>Testis</tissue>
    </source>
</reference>
<reference key="4">
    <citation type="journal article" date="2004" name="Nature">
        <title>The DNA sequence and biology of human chromosome 19.</title>
        <authorList>
            <person name="Grimwood J."/>
            <person name="Gordon L.A."/>
            <person name="Olsen A.S."/>
            <person name="Terry A."/>
            <person name="Schmutz J."/>
            <person name="Lamerdin J.E."/>
            <person name="Hellsten U."/>
            <person name="Goodstein D."/>
            <person name="Couronne O."/>
            <person name="Tran-Gyamfi M."/>
            <person name="Aerts A."/>
            <person name="Altherr M."/>
            <person name="Ashworth L."/>
            <person name="Bajorek E."/>
            <person name="Black S."/>
            <person name="Branscomb E."/>
            <person name="Caenepeel S."/>
            <person name="Carrano A.V."/>
            <person name="Caoile C."/>
            <person name="Chan Y.M."/>
            <person name="Christensen M."/>
            <person name="Cleland C.A."/>
            <person name="Copeland A."/>
            <person name="Dalin E."/>
            <person name="Dehal P."/>
            <person name="Denys M."/>
            <person name="Detter J.C."/>
            <person name="Escobar J."/>
            <person name="Flowers D."/>
            <person name="Fotopulos D."/>
            <person name="Garcia C."/>
            <person name="Georgescu A.M."/>
            <person name="Glavina T."/>
            <person name="Gomez M."/>
            <person name="Gonzales E."/>
            <person name="Groza M."/>
            <person name="Hammon N."/>
            <person name="Hawkins T."/>
            <person name="Haydu L."/>
            <person name="Ho I."/>
            <person name="Huang W."/>
            <person name="Israni S."/>
            <person name="Jett J."/>
            <person name="Kadner K."/>
            <person name="Kimball H."/>
            <person name="Kobayashi A."/>
            <person name="Larionov V."/>
            <person name="Leem S.-H."/>
            <person name="Lopez F."/>
            <person name="Lou Y."/>
            <person name="Lowry S."/>
            <person name="Malfatti S."/>
            <person name="Martinez D."/>
            <person name="McCready P.M."/>
            <person name="Medina C."/>
            <person name="Morgan J."/>
            <person name="Nelson K."/>
            <person name="Nolan M."/>
            <person name="Ovcharenko I."/>
            <person name="Pitluck S."/>
            <person name="Pollard M."/>
            <person name="Popkie A.P."/>
            <person name="Predki P."/>
            <person name="Quan G."/>
            <person name="Ramirez L."/>
            <person name="Rash S."/>
            <person name="Retterer J."/>
            <person name="Rodriguez A."/>
            <person name="Rogers S."/>
            <person name="Salamov A."/>
            <person name="Salazar A."/>
            <person name="She X."/>
            <person name="Smith D."/>
            <person name="Slezak T."/>
            <person name="Solovyev V."/>
            <person name="Thayer N."/>
            <person name="Tice H."/>
            <person name="Tsai M."/>
            <person name="Ustaszewska A."/>
            <person name="Vo N."/>
            <person name="Wagner M."/>
            <person name="Wheeler J."/>
            <person name="Wu K."/>
            <person name="Xie G."/>
            <person name="Yang J."/>
            <person name="Dubchak I."/>
            <person name="Furey T.S."/>
            <person name="DeJong P."/>
            <person name="Dickson M."/>
            <person name="Gordon D."/>
            <person name="Eichler E.E."/>
            <person name="Pennacchio L.A."/>
            <person name="Richardson P."/>
            <person name="Stubbs L."/>
            <person name="Rokhsar D.S."/>
            <person name="Myers R.M."/>
            <person name="Rubin E.M."/>
            <person name="Lucas S.M."/>
        </authorList>
    </citation>
    <scope>NUCLEOTIDE SEQUENCE [LARGE SCALE GENOMIC DNA]</scope>
</reference>
<dbReference type="EMBL" id="BX538288">
    <property type="protein sequence ID" value="CAD98083.1"/>
    <property type="status" value="ALT_INIT"/>
    <property type="molecule type" value="mRNA"/>
</dbReference>
<dbReference type="EMBL" id="BC107131">
    <property type="protein sequence ID" value="AAI07132.1"/>
    <property type="molecule type" value="mRNA"/>
</dbReference>
<dbReference type="EMBL" id="BC107132">
    <property type="protein sequence ID" value="AAI07133.1"/>
    <property type="molecule type" value="mRNA"/>
</dbReference>
<dbReference type="EMBL" id="AK130969">
    <property type="protein sequence ID" value="BAC85471.1"/>
    <property type="molecule type" value="mRNA"/>
</dbReference>
<dbReference type="EMBL" id="AC008733">
    <property type="status" value="NOT_ANNOTATED_CDS"/>
    <property type="molecule type" value="Genomic_DNA"/>
</dbReference>
<dbReference type="EMBL" id="KC877740">
    <property type="status" value="NOT_ANNOTATED_CDS"/>
    <property type="molecule type" value="Genomic_DNA"/>
</dbReference>
<dbReference type="CCDS" id="CCDS42557.1">
    <molecule id="Q3KNS6-1"/>
</dbReference>
<dbReference type="CCDS" id="CCDS59380.1">
    <molecule id="Q3KNS6-3"/>
</dbReference>
<dbReference type="RefSeq" id="NP_001032309.2">
    <molecule id="Q3KNS6-1"/>
    <property type="nucleotide sequence ID" value="NM_001037232.4"/>
</dbReference>
<dbReference type="RefSeq" id="NP_001165450.1">
    <molecule id="Q3KNS6-3"/>
    <property type="nucleotide sequence ID" value="NM_001171979.2"/>
</dbReference>
<dbReference type="RefSeq" id="XP_005258933.1">
    <molecule id="Q3KNS6-1"/>
    <property type="nucleotide sequence ID" value="XM_005258876.4"/>
</dbReference>
<dbReference type="RefSeq" id="XP_011525235.1">
    <molecule id="Q3KNS6-1"/>
    <property type="nucleotide sequence ID" value="XM_011526933.3"/>
</dbReference>
<dbReference type="RefSeq" id="XP_054176901.1">
    <molecule id="Q3KNS6-1"/>
    <property type="nucleotide sequence ID" value="XM_054320926.1"/>
</dbReference>
<dbReference type="RefSeq" id="XP_054176902.1">
    <molecule id="Q3KNS6-1"/>
    <property type="nucleotide sequence ID" value="XM_054320927.1"/>
</dbReference>
<dbReference type="SMR" id="Q3KNS6"/>
<dbReference type="BioGRID" id="131934">
    <property type="interactions" value="21"/>
</dbReference>
<dbReference type="FunCoup" id="Q3KNS6">
    <property type="interactions" value="154"/>
</dbReference>
<dbReference type="IntAct" id="Q3KNS6">
    <property type="interactions" value="42"/>
</dbReference>
<dbReference type="MINT" id="Q3KNS6"/>
<dbReference type="STRING" id="9606.ENSP00000428679"/>
<dbReference type="iPTMnet" id="Q3KNS6"/>
<dbReference type="PhosphoSitePlus" id="Q3KNS6"/>
<dbReference type="BioMuta" id="ZNF829"/>
<dbReference type="DMDM" id="121947691"/>
<dbReference type="jPOST" id="Q3KNS6"/>
<dbReference type="MassIVE" id="Q3KNS6"/>
<dbReference type="PaxDb" id="9606-ENSP00000428679"/>
<dbReference type="PeptideAtlas" id="Q3KNS6"/>
<dbReference type="ProteomicsDB" id="61696">
    <molecule id="Q3KNS6-1"/>
</dbReference>
<dbReference type="ProteomicsDB" id="61697">
    <molecule id="Q3KNS6-2"/>
</dbReference>
<dbReference type="Antibodypedia" id="59032">
    <property type="antibodies" value="107 antibodies from 15 providers"/>
</dbReference>
<dbReference type="DNASU" id="374899"/>
<dbReference type="Ensembl" id="ENST00000391711.8">
    <molecule id="Q3KNS6-1"/>
    <property type="protein sequence ID" value="ENSP00000429266.1"/>
    <property type="gene ID" value="ENSG00000185869.15"/>
</dbReference>
<dbReference type="Ensembl" id="ENST00000520965.5">
    <molecule id="Q3KNS6-3"/>
    <property type="protein sequence ID" value="ENSP00000428679.2"/>
    <property type="gene ID" value="ENSG00000185869.15"/>
</dbReference>
<dbReference type="GeneID" id="374899"/>
<dbReference type="KEGG" id="hsa:374899"/>
<dbReference type="MANE-Select" id="ENST00000391711.8">
    <property type="protein sequence ID" value="ENSP00000429266.1"/>
    <property type="RefSeq nucleotide sequence ID" value="NM_001037232.4"/>
    <property type="RefSeq protein sequence ID" value="NP_001032309.2"/>
</dbReference>
<dbReference type="UCSC" id="uc002ofa.3">
    <molecule id="Q3KNS6-1"/>
    <property type="organism name" value="human"/>
</dbReference>
<dbReference type="UCSC" id="uc021utr.1">
    <property type="organism name" value="human"/>
</dbReference>
<dbReference type="AGR" id="HGNC:34032"/>
<dbReference type="CTD" id="374899"/>
<dbReference type="DisGeNET" id="374899"/>
<dbReference type="GeneCards" id="ZNF829"/>
<dbReference type="HGNC" id="HGNC:34032">
    <property type="gene designation" value="ZNF829"/>
</dbReference>
<dbReference type="HPA" id="ENSG00000185869">
    <property type="expression patterns" value="Tissue enriched (testis)"/>
</dbReference>
<dbReference type="neXtProt" id="NX_Q3KNS6"/>
<dbReference type="OpenTargets" id="ENSG00000185869"/>
<dbReference type="PharmGKB" id="PA162410750"/>
<dbReference type="VEuPathDB" id="HostDB:ENSG00000185869"/>
<dbReference type="eggNOG" id="KOG1721">
    <property type="taxonomic scope" value="Eukaryota"/>
</dbReference>
<dbReference type="GeneTree" id="ENSGT00940000156284"/>
<dbReference type="HOGENOM" id="CLU_002678_0_9_1"/>
<dbReference type="InParanoid" id="Q3KNS6"/>
<dbReference type="OrthoDB" id="9411774at2759"/>
<dbReference type="PAN-GO" id="Q3KNS6">
    <property type="GO annotations" value="3 GO annotations based on evolutionary models"/>
</dbReference>
<dbReference type="PhylomeDB" id="Q3KNS6"/>
<dbReference type="TreeFam" id="TF337055"/>
<dbReference type="PathwayCommons" id="Q3KNS6"/>
<dbReference type="SignaLink" id="Q3KNS6"/>
<dbReference type="BioGRID-ORCS" id="374899">
    <property type="hits" value="11 hits in 1153 CRISPR screens"/>
</dbReference>
<dbReference type="ChiTaRS" id="ZNF829">
    <property type="organism name" value="human"/>
</dbReference>
<dbReference type="GenomeRNAi" id="374899"/>
<dbReference type="Pharos" id="Q3KNS6">
    <property type="development level" value="Tdark"/>
</dbReference>
<dbReference type="PRO" id="PR:Q3KNS6"/>
<dbReference type="Proteomes" id="UP000005640">
    <property type="component" value="Chromosome 19"/>
</dbReference>
<dbReference type="RNAct" id="Q3KNS6">
    <property type="molecule type" value="protein"/>
</dbReference>
<dbReference type="Bgee" id="ENSG00000185869">
    <property type="expression patterns" value="Expressed in sperm and 143 other cell types or tissues"/>
</dbReference>
<dbReference type="GO" id="GO:0005634">
    <property type="term" value="C:nucleus"/>
    <property type="evidence" value="ECO:0007669"/>
    <property type="project" value="UniProtKB-SubCell"/>
</dbReference>
<dbReference type="GO" id="GO:0000981">
    <property type="term" value="F:DNA-binding transcription factor activity, RNA polymerase II-specific"/>
    <property type="evidence" value="ECO:0000318"/>
    <property type="project" value="GO_Central"/>
</dbReference>
<dbReference type="GO" id="GO:0000978">
    <property type="term" value="F:RNA polymerase II cis-regulatory region sequence-specific DNA binding"/>
    <property type="evidence" value="ECO:0000318"/>
    <property type="project" value="GO_Central"/>
</dbReference>
<dbReference type="GO" id="GO:0008270">
    <property type="term" value="F:zinc ion binding"/>
    <property type="evidence" value="ECO:0007669"/>
    <property type="project" value="UniProtKB-KW"/>
</dbReference>
<dbReference type="GO" id="GO:0006357">
    <property type="term" value="P:regulation of transcription by RNA polymerase II"/>
    <property type="evidence" value="ECO:0000318"/>
    <property type="project" value="GO_Central"/>
</dbReference>
<dbReference type="CDD" id="cd07765">
    <property type="entry name" value="KRAB_A-box"/>
    <property type="match status" value="1"/>
</dbReference>
<dbReference type="FunFam" id="3.30.160.60:FF:000596">
    <property type="entry name" value="zinc finger protein 10 isoform X1"/>
    <property type="match status" value="1"/>
</dbReference>
<dbReference type="FunFam" id="3.30.160.60:FF:000295">
    <property type="entry name" value="zinc finger protein 19"/>
    <property type="match status" value="1"/>
</dbReference>
<dbReference type="FunFam" id="3.30.160.60:FF:000338">
    <property type="entry name" value="zinc finger protein 383"/>
    <property type="match status" value="1"/>
</dbReference>
<dbReference type="FunFam" id="3.30.160.60:FF:001498">
    <property type="entry name" value="Zinc finger protein 404"/>
    <property type="match status" value="1"/>
</dbReference>
<dbReference type="FunFam" id="3.30.160.60:FF:002254">
    <property type="entry name" value="Zinc finger protein 540"/>
    <property type="match status" value="2"/>
</dbReference>
<dbReference type="FunFam" id="3.30.160.60:FF:001270">
    <property type="entry name" value="zinc finger protein 583 isoform X1"/>
    <property type="match status" value="1"/>
</dbReference>
<dbReference type="FunFam" id="3.30.160.60:FF:001105">
    <property type="entry name" value="Zinc finger protein 677"/>
    <property type="match status" value="1"/>
</dbReference>
<dbReference type="FunFam" id="3.30.160.60:FF:001157">
    <property type="entry name" value="Zinc finger protein 793"/>
    <property type="match status" value="1"/>
</dbReference>
<dbReference type="FunFam" id="3.30.160.60:FF:003509">
    <property type="entry name" value="Zinc finger protein 829"/>
    <property type="match status" value="1"/>
</dbReference>
<dbReference type="Gene3D" id="6.10.140.140">
    <property type="match status" value="1"/>
</dbReference>
<dbReference type="Gene3D" id="3.30.160.60">
    <property type="entry name" value="Classic Zinc Finger"/>
    <property type="match status" value="10"/>
</dbReference>
<dbReference type="InterPro" id="IPR001909">
    <property type="entry name" value="KRAB"/>
</dbReference>
<dbReference type="InterPro" id="IPR036051">
    <property type="entry name" value="KRAB_dom_sf"/>
</dbReference>
<dbReference type="InterPro" id="IPR036236">
    <property type="entry name" value="Znf_C2H2_sf"/>
</dbReference>
<dbReference type="InterPro" id="IPR013087">
    <property type="entry name" value="Znf_C2H2_type"/>
</dbReference>
<dbReference type="PANTHER" id="PTHR23226">
    <property type="entry name" value="ZINC FINGER AND SCAN DOMAIN-CONTAINING"/>
    <property type="match status" value="1"/>
</dbReference>
<dbReference type="PANTHER" id="PTHR23226:SF412">
    <property type="entry name" value="ZINC FINGER PROTEIN 983"/>
    <property type="match status" value="1"/>
</dbReference>
<dbReference type="Pfam" id="PF01352">
    <property type="entry name" value="KRAB"/>
    <property type="match status" value="1"/>
</dbReference>
<dbReference type="Pfam" id="PF00096">
    <property type="entry name" value="zf-C2H2"/>
    <property type="match status" value="9"/>
</dbReference>
<dbReference type="SMART" id="SM00349">
    <property type="entry name" value="KRAB"/>
    <property type="match status" value="1"/>
</dbReference>
<dbReference type="SMART" id="SM00355">
    <property type="entry name" value="ZnF_C2H2"/>
    <property type="match status" value="9"/>
</dbReference>
<dbReference type="SUPFAM" id="SSF57667">
    <property type="entry name" value="beta-beta-alpha zinc fingers"/>
    <property type="match status" value="6"/>
</dbReference>
<dbReference type="SUPFAM" id="SSF109640">
    <property type="entry name" value="KRAB domain (Kruppel-associated box)"/>
    <property type="match status" value="1"/>
</dbReference>
<dbReference type="PROSITE" id="PS50805">
    <property type="entry name" value="KRAB"/>
    <property type="match status" value="1"/>
</dbReference>
<dbReference type="PROSITE" id="PS00028">
    <property type="entry name" value="ZINC_FINGER_C2H2_1"/>
    <property type="match status" value="9"/>
</dbReference>
<dbReference type="PROSITE" id="PS50157">
    <property type="entry name" value="ZINC_FINGER_C2H2_2"/>
    <property type="match status" value="10"/>
</dbReference>
<name>ZN829_HUMAN</name>
<gene>
    <name type="primary">ZNF829</name>
</gene>
<sequence>MPHSPLISIPHVWCHPEEEERMHDELLQAVSKGPVMFRDVSIDFSQEEWECLDADQMNLYKEVMLENFSNLVSVGLSNSKPAVISLLEQGKEPWMVDRELTRGLCSDLESMCETKILSLKKRHFSQVIITREDMSTFIQPTFLIPPQKTMSEEKPWECKICGKTFNQNSQFIQHQRIHFGEKHYESKEYGKSFSRGSLVTRHQRIHTGKKPYECKECGKAFSCSSYFSQHQRIHTGEKPYECKECGKAFKYCSNLNDHQRIHTGEKPYECKVCGKAFTKSSQLFLHLRIHTGEKPYECKECGKAFTQHSRLIQHQRMHTGEKPYECKQCGKAFNSASTLTNHHRIHAGEKLYECEECRKAFIQSSELIQHQRIHTDEKPYECNECGKAFNKGSNLTRHQRIHTGEKPYDCKECGKAFGSRSDLIRHEGIHTG</sequence>